<gene>
    <name evidence="1" type="primary">prcB</name>
    <name type="ordered locus">Jden_1204</name>
</gene>
<name>PSB_JONDD</name>
<evidence type="ECO:0000255" key="1">
    <source>
        <dbReference type="HAMAP-Rule" id="MF_02113"/>
    </source>
</evidence>
<evidence type="ECO:0000256" key="2">
    <source>
        <dbReference type="SAM" id="MobiDB-lite"/>
    </source>
</evidence>
<dbReference type="EC" id="3.4.25.1" evidence="1"/>
<dbReference type="EMBL" id="CP001706">
    <property type="protein sequence ID" value="ACV08860.1"/>
    <property type="molecule type" value="Genomic_DNA"/>
</dbReference>
<dbReference type="RefSeq" id="WP_015771488.1">
    <property type="nucleotide sequence ID" value="NC_013174.1"/>
</dbReference>
<dbReference type="SMR" id="C7R403"/>
<dbReference type="STRING" id="471856.Jden_1204"/>
<dbReference type="KEGG" id="jde:Jden_1204"/>
<dbReference type="eggNOG" id="COG0638">
    <property type="taxonomic scope" value="Bacteria"/>
</dbReference>
<dbReference type="HOGENOM" id="CLU_035750_2_0_11"/>
<dbReference type="OrthoDB" id="5174038at2"/>
<dbReference type="UniPathway" id="UPA00997"/>
<dbReference type="Proteomes" id="UP000000628">
    <property type="component" value="Chromosome"/>
</dbReference>
<dbReference type="GO" id="GO:0005737">
    <property type="term" value="C:cytoplasm"/>
    <property type="evidence" value="ECO:0007669"/>
    <property type="project" value="UniProtKB-SubCell"/>
</dbReference>
<dbReference type="GO" id="GO:0019774">
    <property type="term" value="C:proteasome core complex, beta-subunit complex"/>
    <property type="evidence" value="ECO:0007669"/>
    <property type="project" value="UniProtKB-UniRule"/>
</dbReference>
<dbReference type="GO" id="GO:0004298">
    <property type="term" value="F:threonine-type endopeptidase activity"/>
    <property type="evidence" value="ECO:0007669"/>
    <property type="project" value="UniProtKB-UniRule"/>
</dbReference>
<dbReference type="GO" id="GO:0019941">
    <property type="term" value="P:modification-dependent protein catabolic process"/>
    <property type="evidence" value="ECO:0007669"/>
    <property type="project" value="UniProtKB-UniRule"/>
</dbReference>
<dbReference type="GO" id="GO:0010498">
    <property type="term" value="P:proteasomal protein catabolic process"/>
    <property type="evidence" value="ECO:0007669"/>
    <property type="project" value="UniProtKB-UniRule"/>
</dbReference>
<dbReference type="CDD" id="cd01906">
    <property type="entry name" value="proteasome_protease_HslV"/>
    <property type="match status" value="1"/>
</dbReference>
<dbReference type="Gene3D" id="3.60.20.10">
    <property type="entry name" value="Glutamine Phosphoribosylpyrophosphate, subunit 1, domain 1"/>
    <property type="match status" value="1"/>
</dbReference>
<dbReference type="HAMAP" id="MF_02113_B">
    <property type="entry name" value="Proteasome_B_B"/>
    <property type="match status" value="1"/>
</dbReference>
<dbReference type="InterPro" id="IPR029055">
    <property type="entry name" value="Ntn_hydrolases_N"/>
</dbReference>
<dbReference type="InterPro" id="IPR001353">
    <property type="entry name" value="Proteasome_sua/b"/>
</dbReference>
<dbReference type="InterPro" id="IPR023333">
    <property type="entry name" value="Proteasome_suB-type"/>
</dbReference>
<dbReference type="InterPro" id="IPR022483">
    <property type="entry name" value="PSB_actinobac"/>
</dbReference>
<dbReference type="NCBIfam" id="TIGR03690">
    <property type="entry name" value="20S_bact_beta"/>
    <property type="match status" value="1"/>
</dbReference>
<dbReference type="PANTHER" id="PTHR32194:SF0">
    <property type="entry name" value="ATP-DEPENDENT PROTEASE SUBUNIT HSLV"/>
    <property type="match status" value="1"/>
</dbReference>
<dbReference type="PANTHER" id="PTHR32194">
    <property type="entry name" value="METALLOPROTEASE TLDD"/>
    <property type="match status" value="1"/>
</dbReference>
<dbReference type="Pfam" id="PF00227">
    <property type="entry name" value="Proteasome"/>
    <property type="match status" value="1"/>
</dbReference>
<dbReference type="SUPFAM" id="SSF56235">
    <property type="entry name" value="N-terminal nucleophile aminohydrolases (Ntn hydrolases)"/>
    <property type="match status" value="1"/>
</dbReference>
<dbReference type="PROSITE" id="PS51476">
    <property type="entry name" value="PROTEASOME_BETA_2"/>
    <property type="match status" value="1"/>
</dbReference>
<accession>C7R403</accession>
<sequence>MTITGSRGFPDGYLAPGSSFLDFAAQHAPTIMPGTQPTFDTIPQDIAPHGTTIVALEYHNGIIIAGDRRATMGTTIAHREIEKVFAADEHSAIAIAGTAGLAIELVRLFQLELEHYEKIEGTPLSLDGKANRLSTMLRSHLHLALQGLPIVPIFAGWDSTRHQGRLFAYDVTGGRYEEPNFTCAGSGSVFARSALKKLWKPQLDATRAITIALEALWDAADDDTATAGPDIIRRIWPIIAVIDHKGFRYVSEADLAHANDTIAHQRSQDHQHVRVLEPGRDGPGNRLPSQGSATIIPESDQS</sequence>
<reference key="1">
    <citation type="journal article" date="2009" name="Stand. Genomic Sci.">
        <title>Complete genome sequence of Jonesia denitrificans type strain (Prevot 55134).</title>
        <authorList>
            <person name="Pukall R."/>
            <person name="Gehrich-Schroter G."/>
            <person name="Lapidus A."/>
            <person name="Nolan M."/>
            <person name="Glavina Del Rio T."/>
            <person name="Lucas S."/>
            <person name="Chen F."/>
            <person name="Tice H."/>
            <person name="Pitluck S."/>
            <person name="Cheng J.F."/>
            <person name="Copeland A."/>
            <person name="Saunders E."/>
            <person name="Brettin T."/>
            <person name="Detter J.C."/>
            <person name="Bruce D."/>
            <person name="Goodwin L."/>
            <person name="Pati A."/>
            <person name="Ivanova N."/>
            <person name="Mavromatis K."/>
            <person name="Ovchinnikova G."/>
            <person name="Chen A."/>
            <person name="Palaniappan K."/>
            <person name="Land M."/>
            <person name="Hauser L."/>
            <person name="Chang Y.J."/>
            <person name="Jeffries C.D."/>
            <person name="Chain P."/>
            <person name="Goker M."/>
            <person name="Bristow J."/>
            <person name="Eisen J.A."/>
            <person name="Markowitz V."/>
            <person name="Hugenholtz P."/>
            <person name="Kyrpides N.C."/>
            <person name="Klenk H.P."/>
            <person name="Han C."/>
        </authorList>
    </citation>
    <scope>NUCLEOTIDE SEQUENCE [LARGE SCALE GENOMIC DNA]</scope>
    <source>
        <strain>ATCC 14870 / DSM 20603 / BCRC 15368 / CIP 55.134 / JCM 11481 / NBRC 15587 / NCTC 10816 / Prevot 55134</strain>
    </source>
</reference>
<feature type="propeptide" id="PRO_0000397514" description="Removed in mature form; by autocatalysis" evidence="1">
    <location>
        <begin position="1"/>
        <end position="50"/>
    </location>
</feature>
<feature type="chain" id="PRO_0000397515" description="Proteasome subunit beta">
    <location>
        <begin position="51"/>
        <end position="302"/>
    </location>
</feature>
<feature type="region of interest" description="Disordered" evidence="2">
    <location>
        <begin position="277"/>
        <end position="302"/>
    </location>
</feature>
<feature type="compositionally biased region" description="Polar residues" evidence="2">
    <location>
        <begin position="287"/>
        <end position="302"/>
    </location>
</feature>
<feature type="active site" description="Nucleophile" evidence="1">
    <location>
        <position position="51"/>
    </location>
</feature>
<protein>
    <recommendedName>
        <fullName evidence="1">Proteasome subunit beta</fullName>
        <ecNumber evidence="1">3.4.25.1</ecNumber>
    </recommendedName>
    <alternativeName>
        <fullName evidence="1">20S proteasome beta subunit</fullName>
    </alternativeName>
    <alternativeName>
        <fullName evidence="1">Proteasome core protein PrcB</fullName>
    </alternativeName>
</protein>
<organism>
    <name type="scientific">Jonesia denitrificans (strain ATCC 14870 / DSM 20603 / BCRC 15368 / CIP 55.134 / JCM 11481 / NBRC 15587 / NCTC 10816 / Prevot 55134)</name>
    <name type="common">Listeria denitrificans</name>
    <dbReference type="NCBI Taxonomy" id="471856"/>
    <lineage>
        <taxon>Bacteria</taxon>
        <taxon>Bacillati</taxon>
        <taxon>Actinomycetota</taxon>
        <taxon>Actinomycetes</taxon>
        <taxon>Micrococcales</taxon>
        <taxon>Jonesiaceae</taxon>
        <taxon>Jonesia</taxon>
    </lineage>
</organism>
<keyword id="KW-0068">Autocatalytic cleavage</keyword>
<keyword id="KW-0963">Cytoplasm</keyword>
<keyword id="KW-0378">Hydrolase</keyword>
<keyword id="KW-0645">Protease</keyword>
<keyword id="KW-0647">Proteasome</keyword>
<keyword id="KW-1185">Reference proteome</keyword>
<keyword id="KW-0888">Threonine protease</keyword>
<keyword id="KW-0865">Zymogen</keyword>
<comment type="function">
    <text evidence="1">Component of the proteasome core, a large protease complex with broad specificity involved in protein degradation.</text>
</comment>
<comment type="catalytic activity">
    <reaction evidence="1">
        <text>Cleavage of peptide bonds with very broad specificity.</text>
        <dbReference type="EC" id="3.4.25.1"/>
    </reaction>
</comment>
<comment type="activity regulation">
    <text evidence="1">The formation of the proteasomal ATPase ARC-20S proteasome complex, likely via the docking of the C-termini of ARC into the intersubunit pockets in the alpha-rings, may trigger opening of the gate for substrate entry. Interconversion between the open-gate and close-gate conformations leads to a dynamic regulation of the 20S proteasome proteolysis activity.</text>
</comment>
<comment type="pathway">
    <text evidence="1">Protein degradation; proteasomal Pup-dependent pathway.</text>
</comment>
<comment type="subunit">
    <text evidence="1">The 20S proteasome core is composed of 14 alpha and 14 beta subunits that assemble into four stacked heptameric rings, resulting in a barrel-shaped structure. The two inner rings, each composed of seven catalytic beta subunits, are sandwiched by two outer rings, each composed of seven alpha subunits. The catalytic chamber with the active sites is on the inside of the barrel. Has a gated structure, the ends of the cylinder being occluded by the N-termini of the alpha-subunits. Is capped by the proteasome-associated ATPase, ARC.</text>
</comment>
<comment type="subcellular location">
    <subcellularLocation>
        <location evidence="1">Cytoplasm</location>
    </subcellularLocation>
</comment>
<comment type="similarity">
    <text evidence="1">Belongs to the peptidase T1B family.</text>
</comment>
<proteinExistence type="inferred from homology"/>